<gene>
    <name evidence="1" type="primary">aspS</name>
    <name type="ordered locus">Sputcn32_1935</name>
</gene>
<proteinExistence type="inferred from homology"/>
<name>SYD_SHEPC</name>
<keyword id="KW-0030">Aminoacyl-tRNA synthetase</keyword>
<keyword id="KW-0067">ATP-binding</keyword>
<keyword id="KW-0963">Cytoplasm</keyword>
<keyword id="KW-0436">Ligase</keyword>
<keyword id="KW-0547">Nucleotide-binding</keyword>
<keyword id="KW-0648">Protein biosynthesis</keyword>
<comment type="function">
    <text evidence="1">Catalyzes the attachment of L-aspartate to tRNA(Asp) in a two-step reaction: L-aspartate is first activated by ATP to form Asp-AMP and then transferred to the acceptor end of tRNA(Asp).</text>
</comment>
<comment type="catalytic activity">
    <reaction evidence="1">
        <text>tRNA(Asp) + L-aspartate + ATP = L-aspartyl-tRNA(Asp) + AMP + diphosphate</text>
        <dbReference type="Rhea" id="RHEA:19649"/>
        <dbReference type="Rhea" id="RHEA-COMP:9660"/>
        <dbReference type="Rhea" id="RHEA-COMP:9678"/>
        <dbReference type="ChEBI" id="CHEBI:29991"/>
        <dbReference type="ChEBI" id="CHEBI:30616"/>
        <dbReference type="ChEBI" id="CHEBI:33019"/>
        <dbReference type="ChEBI" id="CHEBI:78442"/>
        <dbReference type="ChEBI" id="CHEBI:78516"/>
        <dbReference type="ChEBI" id="CHEBI:456215"/>
        <dbReference type="EC" id="6.1.1.12"/>
    </reaction>
</comment>
<comment type="subunit">
    <text evidence="1">Homodimer.</text>
</comment>
<comment type="subcellular location">
    <subcellularLocation>
        <location evidence="1">Cytoplasm</location>
    </subcellularLocation>
</comment>
<comment type="similarity">
    <text evidence="1">Belongs to the class-II aminoacyl-tRNA synthetase family. Type 1 subfamily.</text>
</comment>
<dbReference type="EC" id="6.1.1.12" evidence="1"/>
<dbReference type="EMBL" id="CP000681">
    <property type="protein sequence ID" value="ABP75658.1"/>
    <property type="molecule type" value="Genomic_DNA"/>
</dbReference>
<dbReference type="SMR" id="A4Y6S5"/>
<dbReference type="STRING" id="319224.Sputcn32_1935"/>
<dbReference type="KEGG" id="spc:Sputcn32_1935"/>
<dbReference type="eggNOG" id="COG0173">
    <property type="taxonomic scope" value="Bacteria"/>
</dbReference>
<dbReference type="HOGENOM" id="CLU_014330_3_2_6"/>
<dbReference type="GO" id="GO:0005737">
    <property type="term" value="C:cytoplasm"/>
    <property type="evidence" value="ECO:0007669"/>
    <property type="project" value="UniProtKB-SubCell"/>
</dbReference>
<dbReference type="GO" id="GO:0004815">
    <property type="term" value="F:aspartate-tRNA ligase activity"/>
    <property type="evidence" value="ECO:0007669"/>
    <property type="project" value="UniProtKB-UniRule"/>
</dbReference>
<dbReference type="GO" id="GO:0005524">
    <property type="term" value="F:ATP binding"/>
    <property type="evidence" value="ECO:0007669"/>
    <property type="project" value="UniProtKB-UniRule"/>
</dbReference>
<dbReference type="GO" id="GO:0003676">
    <property type="term" value="F:nucleic acid binding"/>
    <property type="evidence" value="ECO:0007669"/>
    <property type="project" value="InterPro"/>
</dbReference>
<dbReference type="GO" id="GO:0006422">
    <property type="term" value="P:aspartyl-tRNA aminoacylation"/>
    <property type="evidence" value="ECO:0007669"/>
    <property type="project" value="UniProtKB-UniRule"/>
</dbReference>
<dbReference type="CDD" id="cd00777">
    <property type="entry name" value="AspRS_core"/>
    <property type="match status" value="1"/>
</dbReference>
<dbReference type="CDD" id="cd04317">
    <property type="entry name" value="EcAspRS_like_N"/>
    <property type="match status" value="1"/>
</dbReference>
<dbReference type="FunFam" id="2.40.50.140:FF:000080">
    <property type="entry name" value="Aspartate--tRNA ligase"/>
    <property type="match status" value="1"/>
</dbReference>
<dbReference type="Gene3D" id="3.30.930.10">
    <property type="entry name" value="Bira Bifunctional Protein, Domain 2"/>
    <property type="match status" value="1"/>
</dbReference>
<dbReference type="Gene3D" id="3.30.1360.30">
    <property type="entry name" value="GAD-like domain"/>
    <property type="match status" value="1"/>
</dbReference>
<dbReference type="Gene3D" id="2.40.50.140">
    <property type="entry name" value="Nucleic acid-binding proteins"/>
    <property type="match status" value="1"/>
</dbReference>
<dbReference type="HAMAP" id="MF_00044">
    <property type="entry name" value="Asp_tRNA_synth_type1"/>
    <property type="match status" value="1"/>
</dbReference>
<dbReference type="InterPro" id="IPR004364">
    <property type="entry name" value="Aa-tRNA-synt_II"/>
</dbReference>
<dbReference type="InterPro" id="IPR006195">
    <property type="entry name" value="aa-tRNA-synth_II"/>
</dbReference>
<dbReference type="InterPro" id="IPR045864">
    <property type="entry name" value="aa-tRNA-synth_II/BPL/LPL"/>
</dbReference>
<dbReference type="InterPro" id="IPR004524">
    <property type="entry name" value="Asp-tRNA-ligase_1"/>
</dbReference>
<dbReference type="InterPro" id="IPR047089">
    <property type="entry name" value="Asp-tRNA-ligase_1_N"/>
</dbReference>
<dbReference type="InterPro" id="IPR002312">
    <property type="entry name" value="Asp/Asn-tRNA-synth_IIb"/>
</dbReference>
<dbReference type="InterPro" id="IPR047090">
    <property type="entry name" value="AspRS_core"/>
</dbReference>
<dbReference type="InterPro" id="IPR004115">
    <property type="entry name" value="GAD-like_sf"/>
</dbReference>
<dbReference type="InterPro" id="IPR029351">
    <property type="entry name" value="GAD_dom"/>
</dbReference>
<dbReference type="InterPro" id="IPR012340">
    <property type="entry name" value="NA-bd_OB-fold"/>
</dbReference>
<dbReference type="InterPro" id="IPR004365">
    <property type="entry name" value="NA-bd_OB_tRNA"/>
</dbReference>
<dbReference type="NCBIfam" id="TIGR00459">
    <property type="entry name" value="aspS_bact"/>
    <property type="match status" value="1"/>
</dbReference>
<dbReference type="NCBIfam" id="NF001750">
    <property type="entry name" value="PRK00476.1"/>
    <property type="match status" value="1"/>
</dbReference>
<dbReference type="PANTHER" id="PTHR22594:SF5">
    <property type="entry name" value="ASPARTATE--TRNA LIGASE, MITOCHONDRIAL"/>
    <property type="match status" value="1"/>
</dbReference>
<dbReference type="PANTHER" id="PTHR22594">
    <property type="entry name" value="ASPARTYL/LYSYL-TRNA SYNTHETASE"/>
    <property type="match status" value="1"/>
</dbReference>
<dbReference type="Pfam" id="PF02938">
    <property type="entry name" value="GAD"/>
    <property type="match status" value="1"/>
</dbReference>
<dbReference type="Pfam" id="PF00152">
    <property type="entry name" value="tRNA-synt_2"/>
    <property type="match status" value="1"/>
</dbReference>
<dbReference type="Pfam" id="PF01336">
    <property type="entry name" value="tRNA_anti-codon"/>
    <property type="match status" value="1"/>
</dbReference>
<dbReference type="PRINTS" id="PR01042">
    <property type="entry name" value="TRNASYNTHASP"/>
</dbReference>
<dbReference type="SUPFAM" id="SSF55681">
    <property type="entry name" value="Class II aaRS and biotin synthetases"/>
    <property type="match status" value="1"/>
</dbReference>
<dbReference type="SUPFAM" id="SSF55261">
    <property type="entry name" value="GAD domain-like"/>
    <property type="match status" value="1"/>
</dbReference>
<dbReference type="SUPFAM" id="SSF50249">
    <property type="entry name" value="Nucleic acid-binding proteins"/>
    <property type="match status" value="1"/>
</dbReference>
<dbReference type="PROSITE" id="PS50862">
    <property type="entry name" value="AA_TRNA_LIGASE_II"/>
    <property type="match status" value="1"/>
</dbReference>
<protein>
    <recommendedName>
        <fullName evidence="1">Aspartate--tRNA ligase</fullName>
        <ecNumber evidence="1">6.1.1.12</ecNumber>
    </recommendedName>
    <alternativeName>
        <fullName evidence="1">Aspartyl-tRNA synthetase</fullName>
        <shortName evidence="1">AspRS</shortName>
    </alternativeName>
</protein>
<accession>A4Y6S5</accession>
<sequence>MRSHYCGDVNKSHVGQEVTLVGWVNRSRDLGGVVFLDLRDREGLVQVVYDPDLPEVFAVASTLRAEFCVQVKGVVRARPDSQVNGQMKTGEIEVLGKALTIINAADPLPLSLDNYQNNSEEQRLKYRYLDLRRPEMAQRLMFRAKVTSAVRRFLDSNGFLDIETPILTKATPEGARDYLVPSRTYKGQFFALPQSPQLFKQLLMMSGFDRYYQIVKCFRDEDLRADRQPEFTQIDIETSFMTSEQVMAKTEEMMRGLFLEMLNVDLGEFPRMTYNEAMRRFGSDKPDLRNPLELVDIADLLKEVEFAVFSAPANDEEGRVAVLRIPGGAALSRKQIDDYTKFVGIYGAKGLAWMKINDLSLGLEGIQSPVLKFLNESIVNEIISRTGAQTGDIILFGADQATVVAESMGALRLKAGEDFSLLQGEWRPLWVVDFPMFEKINGNFHAVHHPFTAPRGVTAAELEANPANRVSDAYDMVLNGCELGGGSVRIHNQEMQSAVFRILGITDDEAKEKFGFLLEALRYGTPPHAGLAFGLDRIIMLMTGASSIRDVMAFPKTTTAACPLTNAPGFANPQQLAELGIAVVEKAVKTEG</sequence>
<feature type="chain" id="PRO_1000006758" description="Aspartate--tRNA ligase">
    <location>
        <begin position="1"/>
        <end position="592"/>
    </location>
</feature>
<feature type="region of interest" description="Aspartate" evidence="1">
    <location>
        <begin position="197"/>
        <end position="200"/>
    </location>
</feature>
<feature type="binding site" evidence="1">
    <location>
        <position position="173"/>
    </location>
    <ligand>
        <name>L-aspartate</name>
        <dbReference type="ChEBI" id="CHEBI:29991"/>
    </ligand>
</feature>
<feature type="binding site" evidence="1">
    <location>
        <begin position="219"/>
        <end position="221"/>
    </location>
    <ligand>
        <name>ATP</name>
        <dbReference type="ChEBI" id="CHEBI:30616"/>
    </ligand>
</feature>
<feature type="binding site" evidence="1">
    <location>
        <position position="219"/>
    </location>
    <ligand>
        <name>L-aspartate</name>
        <dbReference type="ChEBI" id="CHEBI:29991"/>
    </ligand>
</feature>
<feature type="binding site" evidence="1">
    <location>
        <position position="228"/>
    </location>
    <ligand>
        <name>ATP</name>
        <dbReference type="ChEBI" id="CHEBI:30616"/>
    </ligand>
</feature>
<feature type="binding site" evidence="1">
    <location>
        <position position="448"/>
    </location>
    <ligand>
        <name>L-aspartate</name>
        <dbReference type="ChEBI" id="CHEBI:29991"/>
    </ligand>
</feature>
<feature type="binding site" evidence="1">
    <location>
        <position position="482"/>
    </location>
    <ligand>
        <name>ATP</name>
        <dbReference type="ChEBI" id="CHEBI:30616"/>
    </ligand>
</feature>
<feature type="binding site" evidence="1">
    <location>
        <position position="489"/>
    </location>
    <ligand>
        <name>L-aspartate</name>
        <dbReference type="ChEBI" id="CHEBI:29991"/>
    </ligand>
</feature>
<feature type="binding site" evidence="1">
    <location>
        <begin position="534"/>
        <end position="537"/>
    </location>
    <ligand>
        <name>ATP</name>
        <dbReference type="ChEBI" id="CHEBI:30616"/>
    </ligand>
</feature>
<evidence type="ECO:0000255" key="1">
    <source>
        <dbReference type="HAMAP-Rule" id="MF_00044"/>
    </source>
</evidence>
<organism>
    <name type="scientific">Shewanella putrefaciens (strain CN-32 / ATCC BAA-453)</name>
    <dbReference type="NCBI Taxonomy" id="319224"/>
    <lineage>
        <taxon>Bacteria</taxon>
        <taxon>Pseudomonadati</taxon>
        <taxon>Pseudomonadota</taxon>
        <taxon>Gammaproteobacteria</taxon>
        <taxon>Alteromonadales</taxon>
        <taxon>Shewanellaceae</taxon>
        <taxon>Shewanella</taxon>
    </lineage>
</organism>
<reference key="1">
    <citation type="submission" date="2007-04" db="EMBL/GenBank/DDBJ databases">
        <title>Complete sequence of Shewanella putrefaciens CN-32.</title>
        <authorList>
            <consortium name="US DOE Joint Genome Institute"/>
            <person name="Copeland A."/>
            <person name="Lucas S."/>
            <person name="Lapidus A."/>
            <person name="Barry K."/>
            <person name="Detter J.C."/>
            <person name="Glavina del Rio T."/>
            <person name="Hammon N."/>
            <person name="Israni S."/>
            <person name="Dalin E."/>
            <person name="Tice H."/>
            <person name="Pitluck S."/>
            <person name="Chain P."/>
            <person name="Malfatti S."/>
            <person name="Shin M."/>
            <person name="Vergez L."/>
            <person name="Schmutz J."/>
            <person name="Larimer F."/>
            <person name="Land M."/>
            <person name="Hauser L."/>
            <person name="Kyrpides N."/>
            <person name="Mikhailova N."/>
            <person name="Romine M.F."/>
            <person name="Fredrickson J."/>
            <person name="Tiedje J."/>
            <person name="Richardson P."/>
        </authorList>
    </citation>
    <scope>NUCLEOTIDE SEQUENCE [LARGE SCALE GENOMIC DNA]</scope>
    <source>
        <strain>CN-32 / ATCC BAA-453</strain>
    </source>
</reference>